<gene>
    <name type="ordered locus">MPN_139</name>
    <name type="ORF">E07_orf163</name>
    <name type="ORF">MP015</name>
</gene>
<reference key="1">
    <citation type="journal article" date="1996" name="Nucleic Acids Res.">
        <title>Complete sequence analysis of the genome of the bacterium Mycoplasma pneumoniae.</title>
        <authorList>
            <person name="Himmelreich R."/>
            <person name="Hilbert H."/>
            <person name="Plagens H."/>
            <person name="Pirkl E."/>
            <person name="Li B.-C."/>
            <person name="Herrmann R."/>
        </authorList>
    </citation>
    <scope>NUCLEOTIDE SEQUENCE [LARGE SCALE GENOMIC DNA]</scope>
    <source>
        <strain>ATCC 29342 / M129 / Subtype 1</strain>
    </source>
</reference>
<dbReference type="EMBL" id="U00089">
    <property type="protein sequence ID" value="AAB95663.1"/>
    <property type="molecule type" value="Genomic_DNA"/>
</dbReference>
<dbReference type="PIR" id="S73341">
    <property type="entry name" value="S73341"/>
</dbReference>
<dbReference type="RefSeq" id="NP_109827.1">
    <property type="nucleotide sequence ID" value="NC_000912.1"/>
</dbReference>
<dbReference type="RefSeq" id="WP_010874496.1">
    <property type="nucleotide sequence ID" value="NZ_OU342337.1"/>
</dbReference>
<dbReference type="SMR" id="P75259"/>
<dbReference type="STRING" id="272634.MPN_139"/>
<dbReference type="EnsemblBacteria" id="AAB95663">
    <property type="protein sequence ID" value="AAB95663"/>
    <property type="gene ID" value="MPN_139"/>
</dbReference>
<dbReference type="KEGG" id="mpn:MPN_139"/>
<dbReference type="PATRIC" id="fig|272634.6.peg.153"/>
<dbReference type="HOGENOM" id="CLU_137918_0_0_14"/>
<dbReference type="BioCyc" id="MPNE272634:G1GJ3-233-MONOMER"/>
<dbReference type="Proteomes" id="UP000000808">
    <property type="component" value="Chromosome"/>
</dbReference>
<dbReference type="Gene3D" id="6.10.250.40">
    <property type="match status" value="1"/>
</dbReference>
<dbReference type="InterPro" id="IPR002862">
    <property type="entry name" value="DUF16"/>
</dbReference>
<dbReference type="Pfam" id="PF01519">
    <property type="entry name" value="DUF16"/>
    <property type="match status" value="1"/>
</dbReference>
<dbReference type="SUPFAM" id="SSF144266">
    <property type="entry name" value="MPN010-like"/>
    <property type="match status" value="1"/>
</dbReference>
<accession>P75259</accession>
<evidence type="ECO:0000305" key="1"/>
<keyword id="KW-1185">Reference proteome</keyword>
<proteinExistence type="inferred from homology"/>
<sequence length="163" mass="19116">MKEKIPFYNEKEFHDMVKKTKKGTFSGWYIINKNNNSVEFSGSFNRQFKLNKPVIPVNTEYVTRKEFNEYKDSNDQRLTKIETELKSQGQRIQVVEDKVDRLTEVVMVQSQQIKTQGEAMNARMDRFESLVLKSLESIGNTLTDFGKRLDVIETRLDKIDPPK</sequence>
<organism>
    <name type="scientific">Mycoplasma pneumoniae (strain ATCC 29342 / M129 / Subtype 1)</name>
    <name type="common">Mycoplasmoides pneumoniae</name>
    <dbReference type="NCBI Taxonomy" id="272634"/>
    <lineage>
        <taxon>Bacteria</taxon>
        <taxon>Bacillati</taxon>
        <taxon>Mycoplasmatota</taxon>
        <taxon>Mycoplasmoidales</taxon>
        <taxon>Mycoplasmoidaceae</taxon>
        <taxon>Mycoplasmoides</taxon>
    </lineage>
</organism>
<feature type="chain" id="PRO_0000221600" description="UPF0134 protein MPN_139">
    <location>
        <begin position="1"/>
        <end position="163"/>
    </location>
</feature>
<name>Y139_MYCPN</name>
<comment type="similarity">
    <text evidence="1">Belongs to the UPF0134 family.</text>
</comment>
<protein>
    <recommendedName>
        <fullName>UPF0134 protein MPN_139</fullName>
    </recommendedName>
</protein>